<feature type="chain" id="PRO_0000048782" description="SRY-related protein CH4">
    <location>
        <begin position="1" status="less than"/>
        <end position="54" status="greater than"/>
    </location>
</feature>
<feature type="DNA-binding region" description="HMG box" evidence="1">
    <location>
        <begin position="1" status="less than"/>
        <end position="54" status="greater than"/>
    </location>
</feature>
<feature type="non-terminal residue">
    <location>
        <position position="1"/>
    </location>
</feature>
<feature type="non-terminal residue">
    <location>
        <position position="54"/>
    </location>
</feature>
<accession>P40668</accession>
<name>CH04_CHICK</name>
<proteinExistence type="inferred from homology"/>
<comment type="subcellular location">
    <subcellularLocation>
        <location evidence="1">Nucleus</location>
    </subcellularLocation>
</comment>
<protein>
    <recommendedName>
        <fullName>SRY-related protein CH4</fullName>
    </recommendedName>
</protein>
<evidence type="ECO:0000255" key="1">
    <source>
        <dbReference type="PROSITE-ProRule" id="PRU00267"/>
    </source>
</evidence>
<keyword id="KW-0238">DNA-binding</keyword>
<keyword id="KW-0539">Nucleus</keyword>
<keyword id="KW-1185">Reference proteome</keyword>
<organism>
    <name type="scientific">Gallus gallus</name>
    <name type="common">Chicken</name>
    <dbReference type="NCBI Taxonomy" id="9031"/>
    <lineage>
        <taxon>Eukaryota</taxon>
        <taxon>Metazoa</taxon>
        <taxon>Chordata</taxon>
        <taxon>Craniata</taxon>
        <taxon>Vertebrata</taxon>
        <taxon>Euteleostomi</taxon>
        <taxon>Archelosauria</taxon>
        <taxon>Archosauria</taxon>
        <taxon>Dinosauria</taxon>
        <taxon>Saurischia</taxon>
        <taxon>Theropoda</taxon>
        <taxon>Coelurosauria</taxon>
        <taxon>Aves</taxon>
        <taxon>Neognathae</taxon>
        <taxon>Galloanserae</taxon>
        <taxon>Galliformes</taxon>
        <taxon>Phasianidae</taxon>
        <taxon>Phasianinae</taxon>
        <taxon>Gallus</taxon>
    </lineage>
</organism>
<dbReference type="EMBL" id="M86325">
    <property type="protein sequence ID" value="AAA48682.1"/>
    <property type="molecule type" value="Genomic_DNA"/>
</dbReference>
<dbReference type="PIR" id="I50195">
    <property type="entry name" value="I50195"/>
</dbReference>
<dbReference type="SMR" id="P40668"/>
<dbReference type="FunCoup" id="P40668">
    <property type="interactions" value="6"/>
</dbReference>
<dbReference type="InParanoid" id="P40668"/>
<dbReference type="Proteomes" id="UP000000539">
    <property type="component" value="Unassembled WGS sequence"/>
</dbReference>
<dbReference type="GO" id="GO:0005634">
    <property type="term" value="C:nucleus"/>
    <property type="evidence" value="ECO:0007669"/>
    <property type="project" value="UniProtKB-SubCell"/>
</dbReference>
<dbReference type="GO" id="GO:0003677">
    <property type="term" value="F:DNA binding"/>
    <property type="evidence" value="ECO:0007669"/>
    <property type="project" value="UniProtKB-KW"/>
</dbReference>
<dbReference type="FunFam" id="1.10.30.10:FF:000074">
    <property type="entry name" value="SRY-related protein AMA1"/>
    <property type="match status" value="1"/>
</dbReference>
<dbReference type="Gene3D" id="1.10.30.10">
    <property type="entry name" value="High mobility group box domain"/>
    <property type="match status" value="1"/>
</dbReference>
<dbReference type="InterPro" id="IPR009071">
    <property type="entry name" value="HMG_box_dom"/>
</dbReference>
<dbReference type="InterPro" id="IPR036910">
    <property type="entry name" value="HMG_box_dom_sf"/>
</dbReference>
<dbReference type="InterPro" id="IPR050140">
    <property type="entry name" value="SRY-related_HMG-box_TF-like"/>
</dbReference>
<dbReference type="PANTHER" id="PTHR10270:SF324">
    <property type="entry name" value="SOX DOMAIN-CONTAINING PROTEIN DICHAETE-RELATED"/>
    <property type="match status" value="1"/>
</dbReference>
<dbReference type="PANTHER" id="PTHR10270">
    <property type="entry name" value="SOX TRANSCRIPTION FACTOR"/>
    <property type="match status" value="1"/>
</dbReference>
<dbReference type="Pfam" id="PF00505">
    <property type="entry name" value="HMG_box"/>
    <property type="match status" value="1"/>
</dbReference>
<dbReference type="SMART" id="SM00398">
    <property type="entry name" value="HMG"/>
    <property type="match status" value="1"/>
</dbReference>
<dbReference type="SUPFAM" id="SSF47095">
    <property type="entry name" value="HMG-box"/>
    <property type="match status" value="1"/>
</dbReference>
<dbReference type="PROSITE" id="PS50118">
    <property type="entry name" value="HMG_BOX_2"/>
    <property type="match status" value="1"/>
</dbReference>
<sequence>MAQENPKMHNSEISKRLGAEWKLLSEAEKRPFIDDSKRLRAMHMKEYPDYKYRP</sequence>
<reference key="1">
    <citation type="journal article" date="1993" name="PCR Methods Appl.">
        <title>PCR amplification of SRY-related gene sequences reveals evolutionary conservation of the SRY-box motif.</title>
        <authorList>
            <person name="Coriat A.M."/>
            <person name="Mueller U."/>
            <person name="Harry J.L."/>
            <person name="Uwanogho D."/>
            <person name="Sharpe P.T."/>
        </authorList>
    </citation>
    <scope>NUCLEOTIDE SEQUENCE [GENOMIC DNA]</scope>
    <source>
        <tissue>Blood</tissue>
    </source>
</reference>